<keyword id="KW-0003">3Fe-4S</keyword>
<keyword id="KW-0004">4Fe-4S</keyword>
<keyword id="KW-1003">Cell membrane</keyword>
<keyword id="KW-0903">Direct protein sequencing</keyword>
<keyword id="KW-0408">Iron</keyword>
<keyword id="KW-0411">Iron-sulfur</keyword>
<keyword id="KW-0472">Membrane</keyword>
<keyword id="KW-0479">Metal-binding</keyword>
<keyword id="KW-0560">Oxidoreductase</keyword>
<keyword id="KW-0614">Plasmid</keyword>
<keyword id="KW-1185">Reference proteome</keyword>
<keyword id="KW-0732">Signal</keyword>
<accession>O33405</accession>
<accession>F8C128</accession>
<accession>Q6LB91</accession>
<geneLocation type="plasmid">
    <name>megaplasmid pHCG3</name>
</geneLocation>
<protein>
    <recommendedName>
        <fullName>Uptake hydrogenase small subunit</fullName>
        <ecNumber>1.12.99.6</ecNumber>
    </recommendedName>
    <alternativeName>
        <fullName>Hydrogenlyase</fullName>
    </alternativeName>
    <alternativeName>
        <fullName>Membrane-bound hydrogenase small subunit</fullName>
    </alternativeName>
</protein>
<reference key="1">
    <citation type="journal article" date="1997" name="J. Bacteriol.">
        <title>Purification and molecular characterization of the H2 uptake membrane-bound NiFe-hydrogenase from the carboxidotrophic bacterium Oligotropha carboxidovorans.</title>
        <authorList>
            <person name="Santiago B."/>
            <person name="Meyer O."/>
        </authorList>
    </citation>
    <scope>NUCLEOTIDE SEQUENCE [GENOMIC DNA]</scope>
    <scope>PROTEIN SEQUENCE OF 46-63</scope>
    <source>
        <strain>ATCC 49405 / DSM 1227 / KCTC 32145 / OM5</strain>
    </source>
</reference>
<reference key="2">
    <citation type="journal article" date="2003" name="Gene">
        <title>Complete nucleotide sequence of the circular megaplasmid pHCG3 of Oligotropha carboxidovorans: function in the chemolithoautotrophic utilization of CO, H(2) and CO(2).</title>
        <authorList>
            <person name="Fuhrmann S."/>
            <person name="Ferner M."/>
            <person name="Jeffke T."/>
            <person name="Henne A."/>
            <person name="Gottschalk G."/>
            <person name="Meyer O."/>
        </authorList>
    </citation>
    <scope>NUCLEOTIDE SEQUENCE [LARGE SCALE GENOMIC DNA]</scope>
    <source>
        <strain>ATCC 49405 / DSM 1227 / KCTC 32145 / OM5</strain>
    </source>
</reference>
<reference key="3">
    <citation type="journal article" date="2011" name="J. Bacteriol.">
        <title>Complete genome sequences of the chemolithoautotrophic Oligotropha carboxidovorans strains OM4 and OM5.</title>
        <authorList>
            <person name="Volland S."/>
            <person name="Rachinger M."/>
            <person name="Strittmatter A."/>
            <person name="Daniel R."/>
            <person name="Gottschalk G."/>
            <person name="Meyer O."/>
        </authorList>
    </citation>
    <scope>NUCLEOTIDE SEQUENCE [LARGE SCALE GENOMIC DNA]</scope>
    <scope>SEQUENCE REVISION</scope>
    <source>
        <strain>ATCC 49405 / DSM 1227 / KCTC 32145 / OM5</strain>
    </source>
</reference>
<evidence type="ECO:0000250" key="1"/>
<evidence type="ECO:0000250" key="2">
    <source>
        <dbReference type="UniProtKB" id="P21853"/>
    </source>
</evidence>
<evidence type="ECO:0000255" key="3">
    <source>
        <dbReference type="PROSITE-ProRule" id="PRU00648"/>
    </source>
</evidence>
<evidence type="ECO:0000269" key="4">
    <source>
    </source>
</evidence>
<evidence type="ECO:0000305" key="5"/>
<proteinExistence type="evidence at protein level"/>
<dbReference type="EC" id="1.12.99.6"/>
<dbReference type="EMBL" id="CP002827">
    <property type="protein sequence ID" value="AEI08138.1"/>
    <property type="molecule type" value="Genomic_DNA"/>
</dbReference>
<dbReference type="RefSeq" id="WP_013913762.1">
    <property type="nucleotide sequence ID" value="NC_015689.1"/>
</dbReference>
<dbReference type="SMR" id="O33405"/>
<dbReference type="KEGG" id="ocg:OCA5_pHCG300640"/>
<dbReference type="PATRIC" id="fig|504832.7.peg.3639"/>
<dbReference type="HOGENOM" id="CLU_046107_0_0_5"/>
<dbReference type="OrthoDB" id="9766729at2"/>
<dbReference type="Proteomes" id="UP000007730">
    <property type="component" value="Plasmid pHCG3"/>
</dbReference>
<dbReference type="GO" id="GO:0044569">
    <property type="term" value="C:[Ni-Fe] hydrogenase complex"/>
    <property type="evidence" value="ECO:0007669"/>
    <property type="project" value="TreeGrafter"/>
</dbReference>
<dbReference type="GO" id="GO:0009375">
    <property type="term" value="C:ferredoxin hydrogenase complex"/>
    <property type="evidence" value="ECO:0007669"/>
    <property type="project" value="InterPro"/>
</dbReference>
<dbReference type="GO" id="GO:0005886">
    <property type="term" value="C:plasma membrane"/>
    <property type="evidence" value="ECO:0007669"/>
    <property type="project" value="UniProtKB-SubCell"/>
</dbReference>
<dbReference type="GO" id="GO:0051538">
    <property type="term" value="F:3 iron, 4 sulfur cluster binding"/>
    <property type="evidence" value="ECO:0007669"/>
    <property type="project" value="UniProtKB-KW"/>
</dbReference>
<dbReference type="GO" id="GO:0051539">
    <property type="term" value="F:4 iron, 4 sulfur cluster binding"/>
    <property type="evidence" value="ECO:0007669"/>
    <property type="project" value="UniProtKB-KW"/>
</dbReference>
<dbReference type="GO" id="GO:0009055">
    <property type="term" value="F:electron transfer activity"/>
    <property type="evidence" value="ECO:0007669"/>
    <property type="project" value="TreeGrafter"/>
</dbReference>
<dbReference type="GO" id="GO:0008901">
    <property type="term" value="F:ferredoxin hydrogenase activity"/>
    <property type="evidence" value="ECO:0007669"/>
    <property type="project" value="InterPro"/>
</dbReference>
<dbReference type="GO" id="GO:0033748">
    <property type="term" value="F:hydrogenase (acceptor) activity"/>
    <property type="evidence" value="ECO:0007669"/>
    <property type="project" value="UniProtKB-EC"/>
</dbReference>
<dbReference type="GO" id="GO:0046872">
    <property type="term" value="F:metal ion binding"/>
    <property type="evidence" value="ECO:0007669"/>
    <property type="project" value="UniProtKB-KW"/>
</dbReference>
<dbReference type="GO" id="GO:0009061">
    <property type="term" value="P:anaerobic respiration"/>
    <property type="evidence" value="ECO:0007669"/>
    <property type="project" value="TreeGrafter"/>
</dbReference>
<dbReference type="Gene3D" id="4.10.480.10">
    <property type="entry name" value="Cytochrome-c3 hydrogenase, C-terminal domain"/>
    <property type="match status" value="1"/>
</dbReference>
<dbReference type="Gene3D" id="3.40.50.700">
    <property type="entry name" value="NADH:ubiquinone oxidoreductase-like, 20kDa subunit"/>
    <property type="match status" value="1"/>
</dbReference>
<dbReference type="InterPro" id="IPR027394">
    <property type="entry name" value="Cytochrome-c3_hydrogenase_C"/>
</dbReference>
<dbReference type="InterPro" id="IPR006137">
    <property type="entry name" value="NADH_UbQ_OxRdtase-like_20kDa"/>
</dbReference>
<dbReference type="InterPro" id="IPR037148">
    <property type="entry name" value="NiFe-Hase_small_C_sf"/>
</dbReference>
<dbReference type="InterPro" id="IPR037024">
    <property type="entry name" value="NiFe_Hase_small_N_sf"/>
</dbReference>
<dbReference type="InterPro" id="IPR001821">
    <property type="entry name" value="NiFe_hydrogenase_ssu"/>
</dbReference>
<dbReference type="InterPro" id="IPR006311">
    <property type="entry name" value="TAT_signal"/>
</dbReference>
<dbReference type="InterPro" id="IPR019546">
    <property type="entry name" value="TAT_signal_bac_arc"/>
</dbReference>
<dbReference type="NCBIfam" id="TIGR00391">
    <property type="entry name" value="hydA"/>
    <property type="match status" value="1"/>
</dbReference>
<dbReference type="NCBIfam" id="TIGR01409">
    <property type="entry name" value="TAT_signal_seq"/>
    <property type="match status" value="1"/>
</dbReference>
<dbReference type="PANTHER" id="PTHR30013:SF6">
    <property type="entry name" value="HYDROGENASE-1 SMALL CHAIN"/>
    <property type="match status" value="1"/>
</dbReference>
<dbReference type="PANTHER" id="PTHR30013">
    <property type="entry name" value="NIFE / NIFESE HYDROGENASE SMALL SUBUNIT FAMILY MEMBER"/>
    <property type="match status" value="1"/>
</dbReference>
<dbReference type="Pfam" id="PF14720">
    <property type="entry name" value="NiFe_hyd_SSU_C"/>
    <property type="match status" value="1"/>
</dbReference>
<dbReference type="Pfam" id="PF01058">
    <property type="entry name" value="Oxidored_q6"/>
    <property type="match status" value="1"/>
</dbReference>
<dbReference type="PIRSF" id="PIRSF000310">
    <property type="entry name" value="NiFe_hyd_ssu"/>
    <property type="match status" value="1"/>
</dbReference>
<dbReference type="PRINTS" id="PR00614">
    <property type="entry name" value="NIHGNASESMLL"/>
</dbReference>
<dbReference type="SUPFAM" id="SSF56770">
    <property type="entry name" value="HydA/Nqo6-like"/>
    <property type="match status" value="1"/>
</dbReference>
<dbReference type="PROSITE" id="PS51318">
    <property type="entry name" value="TAT"/>
    <property type="match status" value="1"/>
</dbReference>
<organism>
    <name type="scientific">Afipia carboxidovorans (strain ATCC 49405 / DSM 1227 / KCTC 32145 / OM5)</name>
    <name type="common">Oligotropha carboxidovorans</name>
    <dbReference type="NCBI Taxonomy" id="504832"/>
    <lineage>
        <taxon>Bacteria</taxon>
        <taxon>Pseudomonadati</taxon>
        <taxon>Pseudomonadota</taxon>
        <taxon>Alphaproteobacteria</taxon>
        <taxon>Hyphomicrobiales</taxon>
        <taxon>Nitrobacteraceae</taxon>
        <taxon>Afipia</taxon>
    </lineage>
</organism>
<feature type="signal peptide" description="Tat-type signal" evidence="3 4">
    <location>
        <begin position="1"/>
        <end position="45"/>
    </location>
</feature>
<feature type="chain" id="PRO_0000013433" description="Uptake hydrogenase small subunit">
    <location>
        <begin position="46"/>
        <end position="367"/>
    </location>
</feature>
<feature type="binding site" evidence="2">
    <location>
        <position position="62"/>
    </location>
    <ligand>
        <name>[4Fe-4S] cluster</name>
        <dbReference type="ChEBI" id="CHEBI:49883"/>
        <label>1</label>
    </ligand>
</feature>
<feature type="binding site" evidence="2">
    <location>
        <position position="65"/>
    </location>
    <ligand>
        <name>[4Fe-4S] cluster</name>
        <dbReference type="ChEBI" id="CHEBI:49883"/>
        <label>1</label>
    </ligand>
</feature>
<feature type="binding site" evidence="2">
    <location>
        <position position="160"/>
    </location>
    <ligand>
        <name>[4Fe-4S] cluster</name>
        <dbReference type="ChEBI" id="CHEBI:49883"/>
        <label>1</label>
    </ligand>
</feature>
<feature type="binding site" evidence="2">
    <location>
        <position position="194"/>
    </location>
    <ligand>
        <name>[4Fe-4S] cluster</name>
        <dbReference type="ChEBI" id="CHEBI:49883"/>
        <label>1</label>
    </ligand>
</feature>
<feature type="binding site" evidence="2">
    <location>
        <position position="232"/>
    </location>
    <ligand>
        <name>[4Fe-4S] cluster</name>
        <dbReference type="ChEBI" id="CHEBI:49883"/>
        <label>2</label>
    </ligand>
</feature>
<feature type="binding site" evidence="2">
    <location>
        <position position="235"/>
    </location>
    <ligand>
        <name>[4Fe-4S] cluster</name>
        <dbReference type="ChEBI" id="CHEBI:49883"/>
        <label>2</label>
    </ligand>
</feature>
<feature type="binding site" evidence="2">
    <location>
        <position position="260"/>
    </location>
    <ligand>
        <name>[4Fe-4S] cluster</name>
        <dbReference type="ChEBI" id="CHEBI:49883"/>
        <label>2</label>
    </ligand>
</feature>
<feature type="binding site" evidence="2">
    <location>
        <position position="266"/>
    </location>
    <ligand>
        <name>[4Fe-4S] cluster</name>
        <dbReference type="ChEBI" id="CHEBI:49883"/>
        <label>2</label>
    </ligand>
</feature>
<feature type="binding site" evidence="2">
    <location>
        <position position="275"/>
    </location>
    <ligand>
        <name>[3Fe-4S] cluster</name>
        <dbReference type="ChEBI" id="CHEBI:21137"/>
    </ligand>
</feature>
<feature type="binding site" evidence="2">
    <location>
        <position position="294"/>
    </location>
    <ligand>
        <name>[3Fe-4S] cluster</name>
        <dbReference type="ChEBI" id="CHEBI:21137"/>
    </ligand>
</feature>
<feature type="binding site" evidence="2">
    <location>
        <position position="297"/>
    </location>
    <ligand>
        <name>[3Fe-4S] cluster</name>
        <dbReference type="ChEBI" id="CHEBI:21137"/>
    </ligand>
</feature>
<feature type="sequence conflict" description="In Ref. 1; AA sequence." evidence="5" ref="1">
    <original>C</original>
    <variation>E</variation>
    <location>
        <position position="62"/>
    </location>
</feature>
<sequence length="367" mass="40129">MTPTETFYEVMRRQGVTRRSFLKFCSLTATALGLGPAYTSEIAHAMETKPRTPVLWLHGLECTCCSESFIRSAHPLVKDVVLSMISLDYDDTLMAAAGHQAEAALADTIERYKGNYILAVEGNPPLNEDGMFCIIGGKPFVDQLRYAAKHAKAIISWGSCASHGCVQAARPNPTRATPVHQVITDKPIIKVPGCPPIAEVMTGVITYMLTFGKLPELDRTGRPKMFYSQRIHDKCYRRPHFDAGQFVESFDDEGARRGYCLYKVGCKGPTTYNACSTIRWNEGTSFPIQAGHGCIGCSEEGFWDKGSWYARLQDIHQFGIEANADQIGGTVAVGAAGAVAAHAAVSALKRAQTKRQTTTTTTPKEHV</sequence>
<name>MBHS_AFIC5</name>
<comment type="function">
    <text evidence="1">This enzyme recycles the H(2) produced by nitrogenase to increase the production of ATP and to protect nitrogenase against inhibition or damage by O(2) under carbon- or phosphate-limited conditions.</text>
</comment>
<comment type="catalytic activity">
    <reaction>
        <text>H2 + A = AH2</text>
        <dbReference type="Rhea" id="RHEA:12116"/>
        <dbReference type="ChEBI" id="CHEBI:13193"/>
        <dbReference type="ChEBI" id="CHEBI:17499"/>
        <dbReference type="ChEBI" id="CHEBI:18276"/>
        <dbReference type="EC" id="1.12.99.6"/>
    </reaction>
</comment>
<comment type="cofactor">
    <cofactor evidence="2">
        <name>[4Fe-4S] cluster</name>
        <dbReference type="ChEBI" id="CHEBI:49883"/>
    </cofactor>
    <text evidence="2">Binds 2 [4Fe-4S] clusters.</text>
</comment>
<comment type="cofactor">
    <cofactor evidence="2">
        <name>[3Fe-4S] cluster</name>
        <dbReference type="ChEBI" id="CHEBI:21137"/>
    </cofactor>
    <text evidence="2">Binds 1 [3Fe-4S] cluster.</text>
</comment>
<comment type="subunit">
    <text>Heterodimer of a large and a small subunit.</text>
</comment>
<comment type="subcellular location">
    <subcellularLocation>
        <location>Cell membrane</location>
        <topology>Peripheral membrane protein</topology>
    </subcellularLocation>
</comment>
<comment type="PTM">
    <text>Predicted to be exported by the Tat system. The position of the signal peptide cleavage has been experimentally proven.</text>
</comment>
<comment type="similarity">
    <text evidence="5">Belongs to the [NiFe]/[NiFeSe] hydrogenase small subunit family.</text>
</comment>
<gene>
    <name type="primary">hoxS</name>
    <name type="ordered locus">OCA5_pHCG300640</name>
</gene>